<accession>Q2FUB2</accession>
<reference key="1">
    <citation type="journal article" date="2016" name="Stand. Genomic Sci.">
        <title>Complete genome sequence of Methanospirillum hungatei type strain JF1.</title>
        <authorList>
            <person name="Gunsalus R.P."/>
            <person name="Cook L.E."/>
            <person name="Crable B."/>
            <person name="Rohlin L."/>
            <person name="McDonald E."/>
            <person name="Mouttaki H."/>
            <person name="Sieber J.R."/>
            <person name="Poweleit N."/>
            <person name="Zhou H."/>
            <person name="Lapidus A.L."/>
            <person name="Daligault H.E."/>
            <person name="Land M."/>
            <person name="Gilna P."/>
            <person name="Ivanova N."/>
            <person name="Kyrpides N."/>
            <person name="Culley D.E."/>
            <person name="McInerney M.J."/>
        </authorList>
    </citation>
    <scope>NUCLEOTIDE SEQUENCE [LARGE SCALE GENOMIC DNA]</scope>
    <source>
        <strain>ATCC 27890 / DSM 864 / NBRC 100397 / JF-1</strain>
    </source>
</reference>
<reference key="2">
    <citation type="journal article" date="2013" name="J. Biosci. Bioeng.">
        <title>Identification of pantoate kinase and phosphopantothenate synthetase from Methanospirillum hungatei.</title>
        <authorList>
            <person name="Katoh H."/>
            <person name="Tamaki H."/>
            <person name="Tokutake Y."/>
            <person name="Hanada S."/>
            <person name="Chohnan S."/>
        </authorList>
    </citation>
    <scope>FUNCTION</scope>
    <scope>CATALYTIC ACTIVITY</scope>
    <scope>BIOPHYSICOCHEMICAL PROPERTIES</scope>
    <scope>PATHWAY</scope>
    <source>
        <strain>ATCC 27890 / DSM 864 / NBRC 100397 / JF-1</strain>
    </source>
</reference>
<evidence type="ECO:0000255" key="1">
    <source>
        <dbReference type="HAMAP-Rule" id="MF_02223"/>
    </source>
</evidence>
<evidence type="ECO:0000269" key="2">
    <source>
    </source>
</evidence>
<evidence type="ECO:0000303" key="3">
    <source>
    </source>
</evidence>
<evidence type="ECO:0000305" key="4">
    <source>
    </source>
</evidence>
<evidence type="ECO:0000312" key="5">
    <source>
        <dbReference type="EMBL" id="ABD40583.1"/>
    </source>
</evidence>
<feature type="chain" id="PRO_0000448240" description="Pantoate kinase">
    <location>
        <begin position="1"/>
        <end position="289"/>
    </location>
</feature>
<comment type="function">
    <text evidence="2">Phosphorylates (R)-pantoate to form (R)-4-phosphopantoate in the CoA biosynthesis pathway (PubMed:23200110). ATP is the best phosphate donor. Can be replaced with UTP, with lower efficiency (PubMed:23200110).</text>
</comment>
<comment type="catalytic activity">
    <reaction evidence="1 2">
        <text>(R)-pantoate + ATP = (R)-4-phosphopantoate + ADP + H(+)</text>
        <dbReference type="Rhea" id="RHEA:28246"/>
        <dbReference type="ChEBI" id="CHEBI:15378"/>
        <dbReference type="ChEBI" id="CHEBI:15980"/>
        <dbReference type="ChEBI" id="CHEBI:30616"/>
        <dbReference type="ChEBI" id="CHEBI:61294"/>
        <dbReference type="ChEBI" id="CHEBI:456216"/>
        <dbReference type="EC" id="2.7.1.169"/>
    </reaction>
</comment>
<comment type="biophysicochemical properties">
    <phDependence>
        <text evidence="2">Optimum pH is 8.5.</text>
    </phDependence>
    <temperatureDependence>
        <text evidence="2">Optimum temperature is 40 degrees Celsius.</text>
    </temperatureDependence>
</comment>
<comment type="pathway">
    <text evidence="1 4">Cofactor biosynthesis; coenzyme A biosynthesis.</text>
</comment>
<comment type="similarity">
    <text evidence="1">Belongs to the GHMP kinase family. PoK subfamily.</text>
</comment>
<protein>
    <recommendedName>
        <fullName evidence="1 3">Pantoate kinase</fullName>
        <shortName evidence="1 3">PoK</shortName>
        <ecNumber evidence="1">2.7.1.169</ecNumber>
    </recommendedName>
</protein>
<organism>
    <name type="scientific">Methanospirillum hungatei JF-1 (strain ATCC 27890 / DSM 864 / NBRC 100397 / JF-1)</name>
    <dbReference type="NCBI Taxonomy" id="323259"/>
    <lineage>
        <taxon>Archaea</taxon>
        <taxon>Methanobacteriati</taxon>
        <taxon>Methanobacteriota</taxon>
        <taxon>Stenosarchaea group</taxon>
        <taxon>Methanomicrobia</taxon>
        <taxon>Methanomicrobiales</taxon>
        <taxon>Methanospirillaceae</taxon>
        <taxon>Methanospirillum</taxon>
    </lineage>
</organism>
<sequence length="289" mass="31027">MELTRVTAFCPGHISGYFLPVIHDDPDLSGSIGAGIVISEGVRVIAEKSADSTVKIFQTDRYGLPEEIAESSPVLMDLLAYMQVNASIETFCHLPIGSGYGMSAAALLGTVHALNALYNFHLSPRECARIAHRIEVQHQSGLGDISACQGGGFVIRKTPGPDGDIMRVIDTRPIYALTISPIKTSSVLSSHDMIAQITQSFPSRIPQNLDDIMSLSREFAEKSGLISKEIRTVLTACDKENLPASMTMLGCGVFALGKRAETVLKKFGEVFKLTISPGGPAILFGERSS</sequence>
<proteinExistence type="evidence at protein level"/>
<name>POK_METHJ</name>
<dbReference type="EC" id="2.7.1.169" evidence="1"/>
<dbReference type="EMBL" id="CP000254">
    <property type="protein sequence ID" value="ABD40583.1"/>
    <property type="molecule type" value="Genomic_DNA"/>
</dbReference>
<dbReference type="RefSeq" id="WP_011447862.1">
    <property type="nucleotide sequence ID" value="NC_007796.1"/>
</dbReference>
<dbReference type="SMR" id="Q2FUB2"/>
<dbReference type="FunCoup" id="Q2FUB2">
    <property type="interactions" value="95"/>
</dbReference>
<dbReference type="STRING" id="323259.Mhun_0831"/>
<dbReference type="EnsemblBacteria" id="ABD40583">
    <property type="protein sequence ID" value="ABD40583"/>
    <property type="gene ID" value="Mhun_0831"/>
</dbReference>
<dbReference type="GeneID" id="3922282"/>
<dbReference type="KEGG" id="mhu:Mhun_0831"/>
<dbReference type="eggNOG" id="arCOG04263">
    <property type="taxonomic scope" value="Archaea"/>
</dbReference>
<dbReference type="HOGENOM" id="CLU_081191_0_0_2"/>
<dbReference type="InParanoid" id="Q2FUB2"/>
<dbReference type="OrthoDB" id="85822at2157"/>
<dbReference type="BRENDA" id="2.7.1.169">
    <property type="organism ID" value="3282"/>
</dbReference>
<dbReference type="UniPathway" id="UPA00241"/>
<dbReference type="Proteomes" id="UP000001941">
    <property type="component" value="Chromosome"/>
</dbReference>
<dbReference type="GO" id="GO:0005524">
    <property type="term" value="F:ATP binding"/>
    <property type="evidence" value="ECO:0007669"/>
    <property type="project" value="UniProtKB-KW"/>
</dbReference>
<dbReference type="GO" id="GO:0016301">
    <property type="term" value="F:kinase activity"/>
    <property type="evidence" value="ECO:0007669"/>
    <property type="project" value="UniProtKB-UniRule"/>
</dbReference>
<dbReference type="GO" id="GO:0015937">
    <property type="term" value="P:coenzyme A biosynthetic process"/>
    <property type="evidence" value="ECO:0007669"/>
    <property type="project" value="UniProtKB-UniRule"/>
</dbReference>
<dbReference type="Gene3D" id="3.30.230.10">
    <property type="match status" value="1"/>
</dbReference>
<dbReference type="HAMAP" id="MF_02223">
    <property type="entry name" value="Pantoate_kinase"/>
    <property type="match status" value="1"/>
</dbReference>
<dbReference type="InterPro" id="IPR006204">
    <property type="entry name" value="GHMP_kinase_N_dom"/>
</dbReference>
<dbReference type="InterPro" id="IPR054946">
    <property type="entry name" value="Panto_kinase"/>
</dbReference>
<dbReference type="InterPro" id="IPR012043">
    <property type="entry name" value="PoK"/>
</dbReference>
<dbReference type="InterPro" id="IPR020568">
    <property type="entry name" value="Ribosomal_Su5_D2-typ_SF"/>
</dbReference>
<dbReference type="InterPro" id="IPR014721">
    <property type="entry name" value="Ribsml_uS5_D2-typ_fold_subgr"/>
</dbReference>
<dbReference type="NCBIfam" id="NF040725">
    <property type="entry name" value="panto_kin_Meth"/>
    <property type="match status" value="1"/>
</dbReference>
<dbReference type="PANTHER" id="PTHR42282:SF1">
    <property type="entry name" value="PANTOATE KINASE"/>
    <property type="match status" value="1"/>
</dbReference>
<dbReference type="PANTHER" id="PTHR42282">
    <property type="entry name" value="PANTOATE KINASE-RELATED"/>
    <property type="match status" value="1"/>
</dbReference>
<dbReference type="Pfam" id="PF00288">
    <property type="entry name" value="GHMP_kinases_N"/>
    <property type="match status" value="1"/>
</dbReference>
<dbReference type="PIRSF" id="PIRSF016896">
    <property type="entry name" value="GHMP_arc_MJ0969"/>
    <property type="match status" value="1"/>
</dbReference>
<dbReference type="SUPFAM" id="SSF54211">
    <property type="entry name" value="Ribosomal protein S5 domain 2-like"/>
    <property type="match status" value="1"/>
</dbReference>
<keyword id="KW-0067">ATP-binding</keyword>
<keyword id="KW-0173">Coenzyme A biosynthesis</keyword>
<keyword id="KW-0418">Kinase</keyword>
<keyword id="KW-0547">Nucleotide-binding</keyword>
<keyword id="KW-1185">Reference proteome</keyword>
<keyword id="KW-0808">Transferase</keyword>
<gene>
    <name evidence="5" type="ordered locus">Mhun_0831</name>
</gene>